<organism>
    <name type="scientific">Arabidopsis thaliana</name>
    <name type="common">Mouse-ear cress</name>
    <dbReference type="NCBI Taxonomy" id="3702"/>
    <lineage>
        <taxon>Eukaryota</taxon>
        <taxon>Viridiplantae</taxon>
        <taxon>Streptophyta</taxon>
        <taxon>Embryophyta</taxon>
        <taxon>Tracheophyta</taxon>
        <taxon>Spermatophyta</taxon>
        <taxon>Magnoliopsida</taxon>
        <taxon>eudicotyledons</taxon>
        <taxon>Gunneridae</taxon>
        <taxon>Pentapetalae</taxon>
        <taxon>rosids</taxon>
        <taxon>malvids</taxon>
        <taxon>Brassicales</taxon>
        <taxon>Brassicaceae</taxon>
        <taxon>Camelineae</taxon>
        <taxon>Arabidopsis</taxon>
    </lineage>
</organism>
<accession>P49294</accession>
<accession>O04950</accession>
<accession>Q0WQP1</accession>
<accession>Q4V3B7</accession>
<dbReference type="EC" id="1.2.1.70"/>
<dbReference type="EMBL" id="U27118">
    <property type="protein sequence ID" value="AAB01674.1"/>
    <property type="molecule type" value="Genomic_DNA"/>
</dbReference>
<dbReference type="EMBL" id="AC000132">
    <property type="protein sequence ID" value="AAB60749.1"/>
    <property type="molecule type" value="Genomic_DNA"/>
</dbReference>
<dbReference type="EMBL" id="CP002684">
    <property type="protein sequence ID" value="AEE28519.1"/>
    <property type="molecule type" value="Genomic_DNA"/>
</dbReference>
<dbReference type="EMBL" id="BT023439">
    <property type="protein sequence ID" value="AAY56430.1"/>
    <property type="molecule type" value="mRNA"/>
</dbReference>
<dbReference type="EMBL" id="AK228651">
    <property type="protein sequence ID" value="BAF00558.1"/>
    <property type="molecule type" value="mRNA"/>
</dbReference>
<dbReference type="PIR" id="G86233">
    <property type="entry name" value="G86233"/>
</dbReference>
<dbReference type="PIR" id="S65773">
    <property type="entry name" value="S65773"/>
</dbReference>
<dbReference type="RefSeq" id="NP_172465.1">
    <property type="nucleotide sequence ID" value="NM_100868.3"/>
</dbReference>
<dbReference type="SMR" id="P49294"/>
<dbReference type="FunCoup" id="P49294">
    <property type="interactions" value="242"/>
</dbReference>
<dbReference type="STRING" id="3702.P49294"/>
<dbReference type="PaxDb" id="3702-AT1G09940.1"/>
<dbReference type="ProteomicsDB" id="230304"/>
<dbReference type="EnsemblPlants" id="AT1G09940.1">
    <property type="protein sequence ID" value="AT1G09940.1"/>
    <property type="gene ID" value="AT1G09940"/>
</dbReference>
<dbReference type="GeneID" id="837528"/>
<dbReference type="Gramene" id="AT1G09940.1">
    <property type="protein sequence ID" value="AT1G09940.1"/>
    <property type="gene ID" value="AT1G09940"/>
</dbReference>
<dbReference type="KEGG" id="ath:AT1G09940"/>
<dbReference type="Araport" id="AT1G09940"/>
<dbReference type="TAIR" id="AT1G09940">
    <property type="gene designation" value="HEMA2"/>
</dbReference>
<dbReference type="eggNOG" id="ENOG502QQ1H">
    <property type="taxonomic scope" value="Eukaryota"/>
</dbReference>
<dbReference type="HOGENOM" id="CLU_035113_2_1_1"/>
<dbReference type="InParanoid" id="P49294"/>
<dbReference type="OMA" id="SKHFEAW"/>
<dbReference type="PhylomeDB" id="P49294"/>
<dbReference type="BioCyc" id="ARA:AT1G09940-MONOMER"/>
<dbReference type="BioCyc" id="MetaCyc:AT1G09940-MONOMER"/>
<dbReference type="UniPathway" id="UPA00251">
    <property type="reaction ID" value="UER00316"/>
</dbReference>
<dbReference type="UniPathway" id="UPA00668"/>
<dbReference type="PRO" id="PR:P49294"/>
<dbReference type="Proteomes" id="UP000006548">
    <property type="component" value="Chromosome 1"/>
</dbReference>
<dbReference type="ExpressionAtlas" id="P49294">
    <property type="expression patterns" value="baseline and differential"/>
</dbReference>
<dbReference type="GO" id="GO:0009507">
    <property type="term" value="C:chloroplast"/>
    <property type="evidence" value="ECO:0007669"/>
    <property type="project" value="UniProtKB-SubCell"/>
</dbReference>
<dbReference type="GO" id="GO:0009536">
    <property type="term" value="C:plastid"/>
    <property type="evidence" value="ECO:0007005"/>
    <property type="project" value="TAIR"/>
</dbReference>
<dbReference type="GO" id="GO:0008883">
    <property type="term" value="F:glutamyl-tRNA reductase activity"/>
    <property type="evidence" value="ECO:0007669"/>
    <property type="project" value="UniProtKB-EC"/>
</dbReference>
<dbReference type="GO" id="GO:0050661">
    <property type="term" value="F:NADP binding"/>
    <property type="evidence" value="ECO:0007669"/>
    <property type="project" value="InterPro"/>
</dbReference>
<dbReference type="GO" id="GO:0015995">
    <property type="term" value="P:chlorophyll biosynthetic process"/>
    <property type="evidence" value="ECO:0007669"/>
    <property type="project" value="UniProtKB-UniPathway"/>
</dbReference>
<dbReference type="GO" id="GO:0006783">
    <property type="term" value="P:heme biosynthetic process"/>
    <property type="evidence" value="ECO:0000315"/>
    <property type="project" value="TAIR"/>
</dbReference>
<dbReference type="GO" id="GO:0006782">
    <property type="term" value="P:protoporphyrinogen IX biosynthetic process"/>
    <property type="evidence" value="ECO:0007669"/>
    <property type="project" value="UniProtKB-UniPathway"/>
</dbReference>
<dbReference type="GO" id="GO:0006979">
    <property type="term" value="P:response to oxidative stress"/>
    <property type="evidence" value="ECO:0000270"/>
    <property type="project" value="TAIR"/>
</dbReference>
<dbReference type="GO" id="GO:0033014">
    <property type="term" value="P:tetrapyrrole biosynthetic process"/>
    <property type="evidence" value="ECO:0000315"/>
    <property type="project" value="TAIR"/>
</dbReference>
<dbReference type="CDD" id="cd05213">
    <property type="entry name" value="NAD_bind_Glutamyl_tRNA_reduct"/>
    <property type="match status" value="1"/>
</dbReference>
<dbReference type="FunFam" id="3.30.460.30:FF:000001">
    <property type="entry name" value="Glutamyl-tRNA reductase"/>
    <property type="match status" value="1"/>
</dbReference>
<dbReference type="FunFam" id="3.40.50.720:FF:000031">
    <property type="entry name" value="Glutamyl-tRNA reductase"/>
    <property type="match status" value="1"/>
</dbReference>
<dbReference type="Gene3D" id="3.30.460.30">
    <property type="entry name" value="Glutamyl-tRNA reductase, N-terminal domain"/>
    <property type="match status" value="1"/>
</dbReference>
<dbReference type="Gene3D" id="3.40.50.720">
    <property type="entry name" value="NAD(P)-binding Rossmann-like Domain"/>
    <property type="match status" value="1"/>
</dbReference>
<dbReference type="HAMAP" id="MF_00087">
    <property type="entry name" value="Glu_tRNA_reductase"/>
    <property type="match status" value="1"/>
</dbReference>
<dbReference type="InterPro" id="IPR000343">
    <property type="entry name" value="4pyrrol_synth_GluRdtase"/>
</dbReference>
<dbReference type="InterPro" id="IPR015896">
    <property type="entry name" value="4pyrrol_synth_GluRdtase_dimer"/>
</dbReference>
<dbReference type="InterPro" id="IPR015895">
    <property type="entry name" value="4pyrrol_synth_GluRdtase_N"/>
</dbReference>
<dbReference type="InterPro" id="IPR018214">
    <property type="entry name" value="GluRdtase_CS"/>
</dbReference>
<dbReference type="InterPro" id="IPR036453">
    <property type="entry name" value="GluRdtase_dimer_dom_sf"/>
</dbReference>
<dbReference type="InterPro" id="IPR036343">
    <property type="entry name" value="GluRdtase_N_sf"/>
</dbReference>
<dbReference type="InterPro" id="IPR036291">
    <property type="entry name" value="NAD(P)-bd_dom_sf"/>
</dbReference>
<dbReference type="InterPro" id="IPR006151">
    <property type="entry name" value="Shikm_DH/Glu-tRNA_Rdtase"/>
</dbReference>
<dbReference type="NCBIfam" id="TIGR01035">
    <property type="entry name" value="hemA"/>
    <property type="match status" value="1"/>
</dbReference>
<dbReference type="PANTHER" id="PTHR43120">
    <property type="entry name" value="GLUTAMYL-TRNA REDUCTASE 1, CHLOROPLASTIC"/>
    <property type="match status" value="1"/>
</dbReference>
<dbReference type="PANTHER" id="PTHR43120:SF14">
    <property type="entry name" value="GLUTAMYL-TRNA REDUCTASE 2, CHLOROPLASTIC"/>
    <property type="match status" value="1"/>
</dbReference>
<dbReference type="Pfam" id="PF00745">
    <property type="entry name" value="GlutR_dimer"/>
    <property type="match status" value="1"/>
</dbReference>
<dbReference type="Pfam" id="PF05201">
    <property type="entry name" value="GlutR_N"/>
    <property type="match status" value="1"/>
</dbReference>
<dbReference type="Pfam" id="PF01488">
    <property type="entry name" value="Shikimate_DH"/>
    <property type="match status" value="1"/>
</dbReference>
<dbReference type="SUPFAM" id="SSF69742">
    <property type="entry name" value="Glutamyl tRNA-reductase catalytic, N-terminal domain"/>
    <property type="match status" value="1"/>
</dbReference>
<dbReference type="SUPFAM" id="SSF69075">
    <property type="entry name" value="Glutamyl tRNA-reductase dimerization domain"/>
    <property type="match status" value="1"/>
</dbReference>
<dbReference type="SUPFAM" id="SSF51735">
    <property type="entry name" value="NAD(P)-binding Rossmann-fold domains"/>
    <property type="match status" value="1"/>
</dbReference>
<dbReference type="PROSITE" id="PS00747">
    <property type="entry name" value="GLUTR"/>
    <property type="match status" value="1"/>
</dbReference>
<reference key="1">
    <citation type="journal article" date="1996" name="Plant Mol. Biol.">
        <title>A second and differentially expressed glutamyl-tRNA reductase gene from Arabidopsis thaliana.</title>
        <authorList>
            <person name="Kumar A.M."/>
            <person name="Csankovszki G."/>
            <person name="Soell D."/>
        </authorList>
    </citation>
    <scope>NUCLEOTIDE SEQUENCE [GENOMIC DNA]</scope>
    <scope>FUNCTION</scope>
    <scope>TISSUE SPECIFICITY</scope>
    <source>
        <strain>cv. Columbia</strain>
    </source>
</reference>
<reference key="2">
    <citation type="journal article" date="2000" name="Nature">
        <title>Sequence and analysis of chromosome 1 of the plant Arabidopsis thaliana.</title>
        <authorList>
            <person name="Theologis A."/>
            <person name="Ecker J.R."/>
            <person name="Palm C.J."/>
            <person name="Federspiel N.A."/>
            <person name="Kaul S."/>
            <person name="White O."/>
            <person name="Alonso J."/>
            <person name="Altafi H."/>
            <person name="Araujo R."/>
            <person name="Bowman C.L."/>
            <person name="Brooks S.Y."/>
            <person name="Buehler E."/>
            <person name="Chan A."/>
            <person name="Chao Q."/>
            <person name="Chen H."/>
            <person name="Cheuk R.F."/>
            <person name="Chin C.W."/>
            <person name="Chung M.K."/>
            <person name="Conn L."/>
            <person name="Conway A.B."/>
            <person name="Conway A.R."/>
            <person name="Creasy T.H."/>
            <person name="Dewar K."/>
            <person name="Dunn P."/>
            <person name="Etgu P."/>
            <person name="Feldblyum T.V."/>
            <person name="Feng J.-D."/>
            <person name="Fong B."/>
            <person name="Fujii C.Y."/>
            <person name="Gill J.E."/>
            <person name="Goldsmith A.D."/>
            <person name="Haas B."/>
            <person name="Hansen N.F."/>
            <person name="Hughes B."/>
            <person name="Huizar L."/>
            <person name="Hunter J.L."/>
            <person name="Jenkins J."/>
            <person name="Johnson-Hopson C."/>
            <person name="Khan S."/>
            <person name="Khaykin E."/>
            <person name="Kim C.J."/>
            <person name="Koo H.L."/>
            <person name="Kremenetskaia I."/>
            <person name="Kurtz D.B."/>
            <person name="Kwan A."/>
            <person name="Lam B."/>
            <person name="Langin-Hooper S."/>
            <person name="Lee A."/>
            <person name="Lee J.M."/>
            <person name="Lenz C.A."/>
            <person name="Li J.H."/>
            <person name="Li Y.-P."/>
            <person name="Lin X."/>
            <person name="Liu S.X."/>
            <person name="Liu Z.A."/>
            <person name="Luros J.S."/>
            <person name="Maiti R."/>
            <person name="Marziali A."/>
            <person name="Militscher J."/>
            <person name="Miranda M."/>
            <person name="Nguyen M."/>
            <person name="Nierman W.C."/>
            <person name="Osborne B.I."/>
            <person name="Pai G."/>
            <person name="Peterson J."/>
            <person name="Pham P.K."/>
            <person name="Rizzo M."/>
            <person name="Rooney T."/>
            <person name="Rowley D."/>
            <person name="Sakano H."/>
            <person name="Salzberg S.L."/>
            <person name="Schwartz J.R."/>
            <person name="Shinn P."/>
            <person name="Southwick A.M."/>
            <person name="Sun H."/>
            <person name="Tallon L.J."/>
            <person name="Tambunga G."/>
            <person name="Toriumi M.J."/>
            <person name="Town C.D."/>
            <person name="Utterback T."/>
            <person name="Van Aken S."/>
            <person name="Vaysberg M."/>
            <person name="Vysotskaia V.S."/>
            <person name="Walker M."/>
            <person name="Wu D."/>
            <person name="Yu G."/>
            <person name="Fraser C.M."/>
            <person name="Venter J.C."/>
            <person name="Davis R.W."/>
        </authorList>
    </citation>
    <scope>NUCLEOTIDE SEQUENCE [LARGE SCALE GENOMIC DNA]</scope>
    <source>
        <strain>cv. Columbia</strain>
    </source>
</reference>
<reference key="3">
    <citation type="journal article" date="2017" name="Plant J.">
        <title>Araport11: a complete reannotation of the Arabidopsis thaliana reference genome.</title>
        <authorList>
            <person name="Cheng C.Y."/>
            <person name="Krishnakumar V."/>
            <person name="Chan A.P."/>
            <person name="Thibaud-Nissen F."/>
            <person name="Schobel S."/>
            <person name="Town C.D."/>
        </authorList>
    </citation>
    <scope>GENOME REANNOTATION</scope>
    <source>
        <strain>cv. Columbia</strain>
    </source>
</reference>
<reference key="4">
    <citation type="submission" date="2005-05" db="EMBL/GenBank/DDBJ databases">
        <title>Arabidopsis ORF clones.</title>
        <authorList>
            <person name="Cheuk R."/>
            <person name="Chen H."/>
            <person name="Kim C.J."/>
            <person name="Shinn P."/>
            <person name="Ecker J.R."/>
        </authorList>
    </citation>
    <scope>NUCLEOTIDE SEQUENCE [LARGE SCALE MRNA]</scope>
    <source>
        <strain>cv. Columbia</strain>
    </source>
</reference>
<reference key="5">
    <citation type="submission" date="2006-07" db="EMBL/GenBank/DDBJ databases">
        <title>Large-scale analysis of RIKEN Arabidopsis full-length (RAFL) cDNAs.</title>
        <authorList>
            <person name="Totoki Y."/>
            <person name="Seki M."/>
            <person name="Ishida J."/>
            <person name="Nakajima M."/>
            <person name="Enju A."/>
            <person name="Kamiya A."/>
            <person name="Narusaka M."/>
            <person name="Shin-i T."/>
            <person name="Nakagawa M."/>
            <person name="Sakamoto N."/>
            <person name="Oishi K."/>
            <person name="Kohara Y."/>
            <person name="Kobayashi M."/>
            <person name="Toyoda A."/>
            <person name="Sakaki Y."/>
            <person name="Sakurai T."/>
            <person name="Iida K."/>
            <person name="Akiyama K."/>
            <person name="Satou M."/>
            <person name="Toyoda T."/>
            <person name="Konagaya A."/>
            <person name="Carninci P."/>
            <person name="Kawai J."/>
            <person name="Hayashizaki Y."/>
            <person name="Shinozaki K."/>
        </authorList>
    </citation>
    <scope>NUCLEOTIDE SEQUENCE [LARGE SCALE MRNA]</scope>
    <source>
        <strain>cv. Columbia</strain>
    </source>
</reference>
<reference key="6">
    <citation type="journal article" date="2002" name="Plant Mol. Biol.">
        <title>Divergent regulation of the HEMA gene family encoding glutamyl-tRNA reductase in Arabidopsis thaliana: expression of HEMA2 is regulated by sugars, but is independent of light and plastid signalling.</title>
        <authorList>
            <person name="Ujwal M.L."/>
            <person name="McCormac A.C."/>
            <person name="Goulding A."/>
            <person name="Kumar A.M."/>
            <person name="Soell D."/>
            <person name="Terry M.J."/>
        </authorList>
    </citation>
    <scope>FUNCTION</scope>
    <scope>TISSUE SPECIFICITY</scope>
    <scope>INDUCTION BY LIGHT</scope>
</reference>
<reference key="7">
    <citation type="journal article" date="2001" name="Plant J.">
        <title>Regulation of HEMA1 expression by phytochrome and a plastid signal during de-etiolation in Arabidopsis thaliana.</title>
        <authorList>
            <person name="McCormac A.C."/>
            <person name="Fischer A."/>
            <person name="Kumar A.M."/>
            <person name="Soll D."/>
            <person name="Terry M.J."/>
        </authorList>
    </citation>
    <scope>INDUCTION BY LIGHT</scope>
    <scope>TISSUE SPECIFICITY</scope>
</reference>
<reference key="8">
    <citation type="journal article" date="2007" name="Plant Physiol.">
        <title>Induction of isoforms of tetrapyrrole biosynthetic enzymes, AtHEMA2 and AtFC1, under stress conditions and their physiological functions in Arabidopsis.</title>
        <authorList>
            <person name="Nagai S."/>
            <person name="Koide M."/>
            <person name="Takahashi S."/>
            <person name="Kikuta A."/>
            <person name="Aono M."/>
            <person name="Sasaki-Sekimoto Y."/>
            <person name="Ohta H."/>
            <person name="Takamiya K."/>
            <person name="Masuda T."/>
        </authorList>
    </citation>
    <scope>FUNCTION</scope>
    <scope>INDUCTION BY WOUNDING AND REACTIVE OXYGEN SPECIES</scope>
    <scope>TISSUE SPECIFICITY</scope>
    <scope>DISRUPTION PHENOTYPE</scope>
</reference>
<evidence type="ECO:0000250" key="1"/>
<evidence type="ECO:0000255" key="2"/>
<evidence type="ECO:0000269" key="3">
    <source>
    </source>
</evidence>
<evidence type="ECO:0000269" key="4">
    <source>
    </source>
</evidence>
<evidence type="ECO:0000269" key="5">
    <source>
    </source>
</evidence>
<evidence type="ECO:0000269" key="6">
    <source>
    </source>
</evidence>
<evidence type="ECO:0000305" key="7"/>
<name>HEM12_ARATH</name>
<keyword id="KW-0149">Chlorophyll biosynthesis</keyword>
<keyword id="KW-0150">Chloroplast</keyword>
<keyword id="KW-0521">NADP</keyword>
<keyword id="KW-0560">Oxidoreductase</keyword>
<keyword id="KW-0934">Plastid</keyword>
<keyword id="KW-0627">Porphyrin biosynthesis</keyword>
<keyword id="KW-1185">Reference proteome</keyword>
<keyword id="KW-0809">Transit peptide</keyword>
<protein>
    <recommendedName>
        <fullName>Glutamyl-tRNA reductase 2, chloroplastic</fullName>
        <shortName>GluTR</shortName>
        <ecNumber>1.2.1.70</ecNumber>
    </recommendedName>
</protein>
<sequence length="530" mass="58292">MAVSSAFVVTPKLEKLLANHHNPTYSSSPAPLDVIGIRALPMNNRNKRGLIQRARCEISPSNKAASISALEQLKTSAIDRYTKERSSIVVIGLSIHTAPVEMREKLAIPEAEWPRAIAELCGLNHIEEAAVLSTCNRMEIYVLALSQHRGVKEVTEWMSKTSGIPVSEICQHRFLLYNKDVTQHIFEVSAGLDSLVLGEGQILAQVKQVVKVGQGVNGFGRNISGLFKHAITVGKRVRTETNIAAGAVSVSSAAVELALMKLPESSHASSARMLVVGAGKMGKLVIKHLVAKGCTKMVVVNRSEEKVAAVRNEMPPGVEIIYKPLDEMLSCAAEADVVFTSTASETPLFLKEQVETLPPVRDARLFVDISVPRNVGSCVAEIDGTRVFNVDDLKEVVAANKEDRVRKAMDAQAIITDESKHFEAWRDSLETVPTIKKLRGYTERIIAAEIEKSLPKMGIDMNKKMRKTVDDLIRGIVNKLLHGPMQHLRCDGNDSRTLSETLDNMQALNRMYGLDAEILEEKIRAKVEKK</sequence>
<feature type="transit peptide" description="Chloroplast" evidence="2">
    <location>
        <begin position="1"/>
        <end position="64"/>
    </location>
</feature>
<feature type="chain" id="PRO_0000013308" description="Glutamyl-tRNA reductase 2, chloroplastic">
    <location>
        <begin position="65"/>
        <end position="530"/>
    </location>
</feature>
<feature type="active site" description="Nucleophile" evidence="1">
    <location>
        <position position="135"/>
    </location>
</feature>
<feature type="binding site" evidence="1">
    <location>
        <begin position="134"/>
        <end position="137"/>
    </location>
    <ligand>
        <name>substrate</name>
    </ligand>
</feature>
<feature type="binding site" evidence="1">
    <location>
        <position position="194"/>
    </location>
    <ligand>
        <name>substrate</name>
    </ligand>
</feature>
<feature type="binding site" evidence="1">
    <location>
        <begin position="199"/>
        <end position="201"/>
    </location>
    <ligand>
        <name>substrate</name>
    </ligand>
</feature>
<feature type="binding site" evidence="1">
    <location>
        <position position="205"/>
    </location>
    <ligand>
        <name>substrate</name>
    </ligand>
</feature>
<feature type="binding site" evidence="1">
    <location>
        <begin position="277"/>
        <end position="282"/>
    </location>
    <ligand>
        <name>NADP(+)</name>
        <dbReference type="ChEBI" id="CHEBI:58349"/>
    </ligand>
</feature>
<feature type="site" description="Important for activity" evidence="1">
    <location>
        <position position="184"/>
    </location>
</feature>
<feature type="sequence conflict" description="In Ref. 5; BAF00558." evidence="7" ref="5">
    <original>A</original>
    <variation>G</variation>
    <location>
        <position position="245"/>
    </location>
</feature>
<feature type="sequence conflict" description="In Ref. 1; AAB01674." evidence="7" ref="1">
    <original>D</original>
    <variation>E</variation>
    <location>
        <position position="410"/>
    </location>
</feature>
<comment type="function">
    <text evidence="4 5 6">Catalyzes the NADPH-dependent reduction of glutamyl-tRNA(Glu) to glutamate 1-semialdehyde (GSA). Probably involved in wound-induced supply of heme to defensive hemoproteins outside plastids.</text>
</comment>
<comment type="catalytic activity">
    <reaction>
        <text>(S)-4-amino-5-oxopentanoate + tRNA(Glu) + NADP(+) = L-glutamyl-tRNA(Glu) + NADPH + H(+)</text>
        <dbReference type="Rhea" id="RHEA:12344"/>
        <dbReference type="Rhea" id="RHEA-COMP:9663"/>
        <dbReference type="Rhea" id="RHEA-COMP:9680"/>
        <dbReference type="ChEBI" id="CHEBI:15378"/>
        <dbReference type="ChEBI" id="CHEBI:57501"/>
        <dbReference type="ChEBI" id="CHEBI:57783"/>
        <dbReference type="ChEBI" id="CHEBI:58349"/>
        <dbReference type="ChEBI" id="CHEBI:78442"/>
        <dbReference type="ChEBI" id="CHEBI:78520"/>
        <dbReference type="EC" id="1.2.1.70"/>
    </reaction>
</comment>
<comment type="pathway">
    <text>Porphyrin-containing compound metabolism; protoporphyrin-IX biosynthesis; 5-aminolevulinate from L-glutamyl-tRNA(Glu): step 1/2.</text>
</comment>
<comment type="pathway">
    <text>Porphyrin-containing compound metabolism; chlorophyll biosynthesis.</text>
</comment>
<comment type="subcellular location">
    <subcellularLocation>
        <location evidence="1">Plastid</location>
        <location evidence="1">Chloroplast</location>
    </subcellularLocation>
</comment>
<comment type="tissue specificity">
    <text evidence="3 4 5 6">Expressed in roots and flowers. Detected in leaves, hypocotyls and cotyledons.</text>
</comment>
<comment type="induction">
    <text evidence="3 4 5">Not regulated by light. Up-regulated locally by wounding and reactive oxygen species. Not regulated by methyl jasmonate.</text>
</comment>
<comment type="disruption phenotype">
    <text evidence="5">No visible phenotype, but decreased heme content in roots.</text>
</comment>
<comment type="miscellaneous">
    <text evidence="1">During catalysis, the active site Cys acts as a nucleophile attacking the alpha-carbonyl group of tRNA-bound glutamate with the formation of a thioester intermediate between enzyme and glutamate, and the concomitant release of tRNA(Glu). The thioester intermediate is finally reduced by direct hydride transfer from NADPH, to form the product GSA (By similarity).</text>
</comment>
<comment type="similarity">
    <text evidence="7">Belongs to the glutamyl-tRNA reductase family.</text>
</comment>
<proteinExistence type="evidence at transcript level"/>
<gene>
    <name type="primary">HEMA2</name>
    <name type="ordered locus">At1g09940</name>
    <name type="ORF">F21M12.33</name>
</gene>